<dbReference type="EC" id="2.7.7.6" evidence="1"/>
<dbReference type="EMBL" id="AJ294725">
    <property type="protein sequence ID" value="CAC24618.1"/>
    <property type="molecule type" value="Genomic_DNA"/>
</dbReference>
<dbReference type="RefSeq" id="NP_075007.1">
    <property type="nucleotide sequence ID" value="NC_002652.1"/>
</dbReference>
<dbReference type="SMR" id="P58131"/>
<dbReference type="GeneID" id="802517"/>
<dbReference type="GO" id="GO:0000428">
    <property type="term" value="C:DNA-directed RNA polymerase complex"/>
    <property type="evidence" value="ECO:0007669"/>
    <property type="project" value="UniProtKB-KW"/>
</dbReference>
<dbReference type="GO" id="GO:0005739">
    <property type="term" value="C:mitochondrion"/>
    <property type="evidence" value="ECO:0007669"/>
    <property type="project" value="GOC"/>
</dbReference>
<dbReference type="GO" id="GO:0009536">
    <property type="term" value="C:plastid"/>
    <property type="evidence" value="ECO:0007669"/>
    <property type="project" value="UniProtKB-SubCell"/>
</dbReference>
<dbReference type="GO" id="GO:0003677">
    <property type="term" value="F:DNA binding"/>
    <property type="evidence" value="ECO:0007669"/>
    <property type="project" value="InterPro"/>
</dbReference>
<dbReference type="GO" id="GO:0003899">
    <property type="term" value="F:DNA-directed RNA polymerase activity"/>
    <property type="evidence" value="ECO:0007669"/>
    <property type="project" value="UniProtKB-EC"/>
</dbReference>
<dbReference type="GO" id="GO:0046872">
    <property type="term" value="F:metal ion binding"/>
    <property type="evidence" value="ECO:0007669"/>
    <property type="project" value="UniProtKB-KW"/>
</dbReference>
<dbReference type="GO" id="GO:0006351">
    <property type="term" value="P:DNA-templated transcription"/>
    <property type="evidence" value="ECO:0007669"/>
    <property type="project" value="InterPro"/>
</dbReference>
<dbReference type="Gene3D" id="1.10.40.90">
    <property type="match status" value="1"/>
</dbReference>
<dbReference type="Gene3D" id="2.40.40.20">
    <property type="match status" value="1"/>
</dbReference>
<dbReference type="Gene3D" id="4.10.860.120">
    <property type="entry name" value="RNA polymerase II, clamp domain"/>
    <property type="match status" value="1"/>
</dbReference>
<dbReference type="Gene3D" id="1.10.274.100">
    <property type="entry name" value="RNA polymerase Rpb1, domain 3"/>
    <property type="match status" value="1"/>
</dbReference>
<dbReference type="InterPro" id="IPR045867">
    <property type="entry name" value="DNA-dir_RpoC_beta_prime"/>
</dbReference>
<dbReference type="InterPro" id="IPR000722">
    <property type="entry name" value="RNA_pol_asu"/>
</dbReference>
<dbReference type="InterPro" id="IPR006592">
    <property type="entry name" value="RNA_pol_N"/>
</dbReference>
<dbReference type="InterPro" id="IPR007080">
    <property type="entry name" value="RNA_pol_Rpb1_1"/>
</dbReference>
<dbReference type="InterPro" id="IPR042102">
    <property type="entry name" value="RNA_pol_Rpb1_3_sf"/>
</dbReference>
<dbReference type="InterPro" id="IPR044893">
    <property type="entry name" value="RNA_pol_Rpb1_clamp_domain"/>
</dbReference>
<dbReference type="PANTHER" id="PTHR19376">
    <property type="entry name" value="DNA-DIRECTED RNA POLYMERASE"/>
    <property type="match status" value="1"/>
</dbReference>
<dbReference type="PANTHER" id="PTHR19376:SF54">
    <property type="entry name" value="DNA-DIRECTED RNA POLYMERASE SUBUNIT BETA"/>
    <property type="match status" value="1"/>
</dbReference>
<dbReference type="Pfam" id="PF04997">
    <property type="entry name" value="RNA_pol_Rpb1_1"/>
    <property type="match status" value="1"/>
</dbReference>
<dbReference type="Pfam" id="PF00623">
    <property type="entry name" value="RNA_pol_Rpb1_2"/>
    <property type="match status" value="2"/>
</dbReference>
<dbReference type="SMART" id="SM00663">
    <property type="entry name" value="RPOLA_N"/>
    <property type="match status" value="1"/>
</dbReference>
<dbReference type="SUPFAM" id="SSF64484">
    <property type="entry name" value="beta and beta-prime subunits of DNA dependent RNA-polymerase"/>
    <property type="match status" value="1"/>
</dbReference>
<evidence type="ECO:0000250" key="1">
    <source>
        <dbReference type="UniProtKB" id="P0A8T7"/>
    </source>
</evidence>
<evidence type="ECO:0000305" key="2"/>
<gene>
    <name evidence="2" type="primary">rpoC1</name>
</gene>
<comment type="function">
    <text evidence="2">DNA-dependent RNA polymerase catalyzes the transcription of DNA into RNA using the four ribonucleoside triphosphates as substrates.</text>
</comment>
<comment type="catalytic activity">
    <reaction evidence="1">
        <text>RNA(n) + a ribonucleoside 5'-triphosphate = RNA(n+1) + diphosphate</text>
        <dbReference type="Rhea" id="RHEA:21248"/>
        <dbReference type="Rhea" id="RHEA-COMP:14527"/>
        <dbReference type="Rhea" id="RHEA-COMP:17342"/>
        <dbReference type="ChEBI" id="CHEBI:33019"/>
        <dbReference type="ChEBI" id="CHEBI:61557"/>
        <dbReference type="ChEBI" id="CHEBI:140395"/>
        <dbReference type="EC" id="2.7.7.6"/>
    </reaction>
</comment>
<comment type="cofactor">
    <cofactor evidence="1">
        <name>Mg(2+)</name>
        <dbReference type="ChEBI" id="CHEBI:18420"/>
    </cofactor>
    <text evidence="1">Binds 1 Mg(2+) ion per subunit.</text>
</comment>
<comment type="cofactor">
    <cofactor evidence="1">
        <name>Zn(2+)</name>
        <dbReference type="ChEBI" id="CHEBI:29105"/>
    </cofactor>
    <text evidence="1">Binds 1 Zn(2+) ion per subunit.</text>
</comment>
<comment type="subunit">
    <text evidence="2">In plastids the minimal PEP RNA polymerase catalytic core is composed of four subunits: alpha, beta, beta', and beta''. When a (nuclear-encoded) sigma factor is associated with the core the holoenzyme is formed, which can initiate transcription.</text>
</comment>
<comment type="subcellular location">
    <subcellularLocation>
        <location>Plastid</location>
    </subcellularLocation>
</comment>
<comment type="similarity">
    <text evidence="2">Belongs to the RNA polymerase beta' chain family. RpoC1 subfamily.</text>
</comment>
<organism>
    <name type="scientific">Euglena longa</name>
    <name type="common">Euglenophycean alga</name>
    <name type="synonym">Astasia longa</name>
    <dbReference type="NCBI Taxonomy" id="3037"/>
    <lineage>
        <taxon>Eukaryota</taxon>
        <taxon>Discoba</taxon>
        <taxon>Euglenozoa</taxon>
        <taxon>Euglenida</taxon>
        <taxon>Spirocuta</taxon>
        <taxon>Euglenophyceae</taxon>
        <taxon>Euglenales</taxon>
        <taxon>Euglenaceae</taxon>
        <taxon>Euglena</taxon>
    </lineage>
</organism>
<reference key="1">
    <citation type="journal article" date="2000" name="Protist">
        <title>Complete gene map of the plastid genome of the nonphotosynthetic euglenoid flagellate Astasia longa.</title>
        <authorList>
            <person name="Gockel G."/>
            <person name="Hachtel W."/>
        </authorList>
    </citation>
    <scope>NUCLEOTIDE SEQUENCE [LARGE SCALE GENOMIC DNA]</scope>
    <source>
        <strain>CCAP 1204-17a</strain>
    </source>
</reference>
<geneLocation type="non-photosynthetic plastid"/>
<proteinExistence type="inferred from homology"/>
<keyword id="KW-0240">DNA-directed RNA polymerase</keyword>
<keyword id="KW-0460">Magnesium</keyword>
<keyword id="KW-0479">Metal-binding</keyword>
<keyword id="KW-0548">Nucleotidyltransferase</keyword>
<keyword id="KW-0934">Plastid</keyword>
<keyword id="KW-0804">Transcription</keyword>
<keyword id="KW-0808">Transferase</keyword>
<keyword id="KW-0862">Zinc</keyword>
<protein>
    <recommendedName>
        <fullName evidence="2">DNA-directed RNA polymerase subunit beta'</fullName>
        <ecNumber evidence="1">2.7.7.6</ecNumber>
    </recommendedName>
    <alternativeName>
        <fullName>PEP</fullName>
    </alternativeName>
    <alternativeName>
        <fullName evidence="2">Plastid-encoded RNA polymerase subunit beta'</fullName>
        <shortName>RNA polymerase subunit beta'</shortName>
    </alternativeName>
</protein>
<accession>P58131</accession>
<name>RPOC1_EUGLO</name>
<sequence length="575" mass="67075">MRDYVKINIASPKQILKWTERLTPKGKYIGKLKNSKKTLDKKGKCIRGGLFCEQIFGPTKKNTCRCGYYKNYKKSKKEKKHIKLCRICNVEITDPIIRNYRMGYIELNIPIINILYLNINPCYLAIITNLKINYLKQLHSGKAYITIKDKNQKEKKLTGGEAINDILSKIDLEKTLIKLTNNIHQYKEKNITIKNFKNILNKIKLYNYLLQTKIKFSWLLFKYLPVLPPNVRPIINMKNNQQISNDLNTLYASIINVNNKIIKLKESLIPDNYFINEKILLQKKVDQLINNEKYKENKLGKIINNKKLKSITENIKGKEGIIRENMLGKTVNFSGRSVIVVEPTLNLNECGLPKEMAINLFYPFIIKELIKLKLIKRLYKIKKITKILDIILENIIKNHYILLNRAPTLHRLNIQAFQPKLTIGKSIKLHPLVCSAFNADFDGDQMGVHIPLSLKAQAEARNILISINNCNSLKNGDPNILPSQDIILGCYFSNIENCNLLYILNKIQIYTNMEKIKMEYKKENLSIHNFIWLNFKNKQQIDKLKIKRKNLIKKIIFLRTTVGRILFNDIIKNFL</sequence>
<feature type="chain" id="PRO_0000067862" description="DNA-directed RNA polymerase subunit beta'">
    <location>
        <begin position="1"/>
        <end position="575"/>
    </location>
</feature>
<feature type="binding site" evidence="1">
    <location>
        <position position="64"/>
    </location>
    <ligand>
        <name>Zn(2+)</name>
        <dbReference type="ChEBI" id="CHEBI:29105"/>
    </ligand>
</feature>
<feature type="binding site" evidence="1">
    <location>
        <position position="66"/>
    </location>
    <ligand>
        <name>Zn(2+)</name>
        <dbReference type="ChEBI" id="CHEBI:29105"/>
    </ligand>
</feature>
<feature type="binding site" evidence="1">
    <location>
        <position position="85"/>
    </location>
    <ligand>
        <name>Zn(2+)</name>
        <dbReference type="ChEBI" id="CHEBI:29105"/>
    </ligand>
</feature>
<feature type="binding site" evidence="1">
    <location>
        <position position="88"/>
    </location>
    <ligand>
        <name>Zn(2+)</name>
        <dbReference type="ChEBI" id="CHEBI:29105"/>
    </ligand>
</feature>
<feature type="binding site" evidence="1">
    <location>
        <position position="440"/>
    </location>
    <ligand>
        <name>Mg(2+)</name>
        <dbReference type="ChEBI" id="CHEBI:18420"/>
    </ligand>
</feature>
<feature type="binding site" evidence="1">
    <location>
        <position position="442"/>
    </location>
    <ligand>
        <name>Mg(2+)</name>
        <dbReference type="ChEBI" id="CHEBI:18420"/>
    </ligand>
</feature>
<feature type="binding site" evidence="1">
    <location>
        <position position="444"/>
    </location>
    <ligand>
        <name>Mg(2+)</name>
        <dbReference type="ChEBI" id="CHEBI:18420"/>
    </ligand>
</feature>